<feature type="chain" id="PRO_1000213297" description="Phosphoribosyl-ATP pyrophosphatase">
    <location>
        <begin position="1"/>
        <end position="126"/>
    </location>
</feature>
<evidence type="ECO:0000255" key="1">
    <source>
        <dbReference type="HAMAP-Rule" id="MF_01020"/>
    </source>
</evidence>
<organism>
    <name type="scientific">Variovorax paradoxus (strain S110)</name>
    <dbReference type="NCBI Taxonomy" id="543728"/>
    <lineage>
        <taxon>Bacteria</taxon>
        <taxon>Pseudomonadati</taxon>
        <taxon>Pseudomonadota</taxon>
        <taxon>Betaproteobacteria</taxon>
        <taxon>Burkholderiales</taxon>
        <taxon>Comamonadaceae</taxon>
        <taxon>Variovorax</taxon>
    </lineage>
</organism>
<dbReference type="EC" id="3.6.1.31" evidence="1"/>
<dbReference type="EMBL" id="CP001635">
    <property type="protein sequence ID" value="ACS17828.1"/>
    <property type="molecule type" value="Genomic_DNA"/>
</dbReference>
<dbReference type="SMR" id="C5CQK2"/>
<dbReference type="STRING" id="543728.Vapar_1177"/>
<dbReference type="KEGG" id="vap:Vapar_1177"/>
<dbReference type="eggNOG" id="COG0140">
    <property type="taxonomic scope" value="Bacteria"/>
</dbReference>
<dbReference type="HOGENOM" id="CLU_123337_1_2_4"/>
<dbReference type="OrthoDB" id="9814738at2"/>
<dbReference type="UniPathway" id="UPA00031">
    <property type="reaction ID" value="UER00007"/>
</dbReference>
<dbReference type="GO" id="GO:0005737">
    <property type="term" value="C:cytoplasm"/>
    <property type="evidence" value="ECO:0007669"/>
    <property type="project" value="UniProtKB-SubCell"/>
</dbReference>
<dbReference type="GO" id="GO:0005524">
    <property type="term" value="F:ATP binding"/>
    <property type="evidence" value="ECO:0007669"/>
    <property type="project" value="UniProtKB-KW"/>
</dbReference>
<dbReference type="GO" id="GO:0004636">
    <property type="term" value="F:phosphoribosyl-ATP diphosphatase activity"/>
    <property type="evidence" value="ECO:0007669"/>
    <property type="project" value="UniProtKB-UniRule"/>
</dbReference>
<dbReference type="GO" id="GO:0000105">
    <property type="term" value="P:L-histidine biosynthetic process"/>
    <property type="evidence" value="ECO:0007669"/>
    <property type="project" value="UniProtKB-UniRule"/>
</dbReference>
<dbReference type="CDD" id="cd11534">
    <property type="entry name" value="NTP-PPase_HisIE_like"/>
    <property type="match status" value="1"/>
</dbReference>
<dbReference type="Gene3D" id="1.10.287.1080">
    <property type="entry name" value="MazG-like"/>
    <property type="match status" value="1"/>
</dbReference>
<dbReference type="HAMAP" id="MF_01020">
    <property type="entry name" value="HisE"/>
    <property type="match status" value="1"/>
</dbReference>
<dbReference type="InterPro" id="IPR008179">
    <property type="entry name" value="HisE"/>
</dbReference>
<dbReference type="InterPro" id="IPR021130">
    <property type="entry name" value="PRib-ATP_PPHydrolase-like"/>
</dbReference>
<dbReference type="NCBIfam" id="TIGR03188">
    <property type="entry name" value="histidine_hisI"/>
    <property type="match status" value="1"/>
</dbReference>
<dbReference type="NCBIfam" id="NF001611">
    <property type="entry name" value="PRK00400.1-3"/>
    <property type="match status" value="1"/>
</dbReference>
<dbReference type="PANTHER" id="PTHR42945">
    <property type="entry name" value="HISTIDINE BIOSYNTHESIS BIFUNCTIONAL PROTEIN"/>
    <property type="match status" value="1"/>
</dbReference>
<dbReference type="PANTHER" id="PTHR42945:SF9">
    <property type="entry name" value="HISTIDINE BIOSYNTHESIS BIFUNCTIONAL PROTEIN HISIE"/>
    <property type="match status" value="1"/>
</dbReference>
<dbReference type="Pfam" id="PF01503">
    <property type="entry name" value="PRA-PH"/>
    <property type="match status" value="1"/>
</dbReference>
<dbReference type="SUPFAM" id="SSF101386">
    <property type="entry name" value="all-alpha NTP pyrophosphatases"/>
    <property type="match status" value="1"/>
</dbReference>
<gene>
    <name evidence="1" type="primary">hisE</name>
    <name type="ordered locus">Vapar_1177</name>
</gene>
<name>HIS2_VARPS</name>
<accession>C5CQK2</accession>
<protein>
    <recommendedName>
        <fullName evidence="1">Phosphoribosyl-ATP pyrophosphatase</fullName>
        <shortName evidence="1">PRA-PH</shortName>
        <ecNumber evidence="1">3.6.1.31</ecNumber>
    </recommendedName>
</protein>
<proteinExistence type="inferred from homology"/>
<reference key="1">
    <citation type="journal article" date="2011" name="J. Bacteriol.">
        <title>Complete genome sequence of the metabolically versatile plant growth-promoting endophyte, Variovorax paradoxus S110.</title>
        <authorList>
            <person name="Han J.I."/>
            <person name="Choi H.K."/>
            <person name="Lee S.W."/>
            <person name="Orwin P.M."/>
            <person name="Kim J."/>
            <person name="Laroe S.L."/>
            <person name="Kim T.G."/>
            <person name="O'Neil J."/>
            <person name="Leadbetter J.R."/>
            <person name="Lee S.Y."/>
            <person name="Hur C.G."/>
            <person name="Spain J.C."/>
            <person name="Ovchinnikova G."/>
            <person name="Goodwin L."/>
            <person name="Han C."/>
        </authorList>
    </citation>
    <scope>NUCLEOTIDE SEQUENCE [LARGE SCALE GENOMIC DNA]</scope>
    <source>
        <strain>S110</strain>
    </source>
</reference>
<sequence length="126" mass="13601">MTATVNTSDALARLAAVIESRLPARGGDPDKSYVARLLHKGPDAFLKKIGEEATEVVMAAKDADHGGDRTKIVNEVADLWFHTMVALAHYGFSPGEVIAELERREGTSGIEEKALRKAQAREASND</sequence>
<keyword id="KW-0028">Amino-acid biosynthesis</keyword>
<keyword id="KW-0067">ATP-binding</keyword>
<keyword id="KW-0963">Cytoplasm</keyword>
<keyword id="KW-0368">Histidine biosynthesis</keyword>
<keyword id="KW-0378">Hydrolase</keyword>
<keyword id="KW-0547">Nucleotide-binding</keyword>
<comment type="catalytic activity">
    <reaction evidence="1">
        <text>1-(5-phospho-beta-D-ribosyl)-ATP + H2O = 1-(5-phospho-beta-D-ribosyl)-5'-AMP + diphosphate + H(+)</text>
        <dbReference type="Rhea" id="RHEA:22828"/>
        <dbReference type="ChEBI" id="CHEBI:15377"/>
        <dbReference type="ChEBI" id="CHEBI:15378"/>
        <dbReference type="ChEBI" id="CHEBI:33019"/>
        <dbReference type="ChEBI" id="CHEBI:59457"/>
        <dbReference type="ChEBI" id="CHEBI:73183"/>
        <dbReference type="EC" id="3.6.1.31"/>
    </reaction>
</comment>
<comment type="pathway">
    <text evidence="1">Amino-acid biosynthesis; L-histidine biosynthesis; L-histidine from 5-phospho-alpha-D-ribose 1-diphosphate: step 2/9.</text>
</comment>
<comment type="subcellular location">
    <subcellularLocation>
        <location evidence="1">Cytoplasm</location>
    </subcellularLocation>
</comment>
<comment type="similarity">
    <text evidence="1">Belongs to the PRA-PH family.</text>
</comment>